<feature type="chain" id="PRO_0000322665" description="UPF0758 protein AZOSEA04420">
    <location>
        <begin position="1"/>
        <end position="225"/>
    </location>
</feature>
<feature type="domain" description="MPN" evidence="1">
    <location>
        <begin position="102"/>
        <end position="225"/>
    </location>
</feature>
<feature type="short sequence motif" description="JAMM motif" evidence="1">
    <location>
        <begin position="173"/>
        <end position="186"/>
    </location>
</feature>
<feature type="binding site" evidence="1">
    <location>
        <position position="173"/>
    </location>
    <ligand>
        <name>Zn(2+)</name>
        <dbReference type="ChEBI" id="CHEBI:29105"/>
        <note>catalytic</note>
    </ligand>
</feature>
<feature type="binding site" evidence="1">
    <location>
        <position position="175"/>
    </location>
    <ligand>
        <name>Zn(2+)</name>
        <dbReference type="ChEBI" id="CHEBI:29105"/>
        <note>catalytic</note>
    </ligand>
</feature>
<feature type="binding site" evidence="1">
    <location>
        <position position="186"/>
    </location>
    <ligand>
        <name>Zn(2+)</name>
        <dbReference type="ChEBI" id="CHEBI:29105"/>
        <note>catalytic</note>
    </ligand>
</feature>
<comment type="similarity">
    <text evidence="2">Belongs to the UPF0758 family.</text>
</comment>
<evidence type="ECO:0000255" key="1">
    <source>
        <dbReference type="PROSITE-ProRule" id="PRU01182"/>
    </source>
</evidence>
<evidence type="ECO:0000305" key="2"/>
<accession>Q5P7Z7</accession>
<protein>
    <recommendedName>
        <fullName>UPF0758 protein AZOSEA04420</fullName>
    </recommendedName>
</protein>
<reference key="1">
    <citation type="journal article" date="2005" name="Arch. Microbiol.">
        <title>The genome sequence of an anaerobic aromatic-degrading denitrifying bacterium, strain EbN1.</title>
        <authorList>
            <person name="Rabus R."/>
            <person name="Kube M."/>
            <person name="Heider J."/>
            <person name="Beck A."/>
            <person name="Heitmann K."/>
            <person name="Widdel F."/>
            <person name="Reinhardt R."/>
        </authorList>
    </citation>
    <scope>NUCLEOTIDE SEQUENCE [LARGE SCALE GENOMIC DNA]</scope>
    <source>
        <strain>DSM 19018 / LMG 30748 / EbN1</strain>
    </source>
</reference>
<gene>
    <name type="ordered locus">AZOSEA04420</name>
    <name type="ORF">ebA840</name>
</gene>
<organism>
    <name type="scientific">Aromatoleum aromaticum (strain DSM 19018 / LMG 30748 / EbN1)</name>
    <name type="common">Azoarcus sp. (strain EbN1)</name>
    <dbReference type="NCBI Taxonomy" id="76114"/>
    <lineage>
        <taxon>Bacteria</taxon>
        <taxon>Pseudomonadati</taxon>
        <taxon>Pseudomonadota</taxon>
        <taxon>Betaproteobacteria</taxon>
        <taxon>Rhodocyclales</taxon>
        <taxon>Rhodocyclaceae</taxon>
        <taxon>Aromatoleum</taxon>
    </lineage>
</organism>
<dbReference type="EMBL" id="CR555306">
    <property type="protein sequence ID" value="CAI06564.1"/>
    <property type="molecule type" value="Genomic_DNA"/>
</dbReference>
<dbReference type="RefSeq" id="WP_011236297.1">
    <property type="nucleotide sequence ID" value="NC_006513.1"/>
</dbReference>
<dbReference type="SMR" id="Q5P7Z7"/>
<dbReference type="STRING" id="76114.ebA840"/>
<dbReference type="KEGG" id="eba:ebA840"/>
<dbReference type="eggNOG" id="COG2003">
    <property type="taxonomic scope" value="Bacteria"/>
</dbReference>
<dbReference type="HOGENOM" id="CLU_073529_0_2_4"/>
<dbReference type="OrthoDB" id="9804482at2"/>
<dbReference type="Proteomes" id="UP000006552">
    <property type="component" value="Chromosome"/>
</dbReference>
<dbReference type="GO" id="GO:0046872">
    <property type="term" value="F:metal ion binding"/>
    <property type="evidence" value="ECO:0007669"/>
    <property type="project" value="UniProtKB-KW"/>
</dbReference>
<dbReference type="GO" id="GO:0008237">
    <property type="term" value="F:metallopeptidase activity"/>
    <property type="evidence" value="ECO:0007669"/>
    <property type="project" value="UniProtKB-KW"/>
</dbReference>
<dbReference type="GO" id="GO:0006508">
    <property type="term" value="P:proteolysis"/>
    <property type="evidence" value="ECO:0007669"/>
    <property type="project" value="UniProtKB-KW"/>
</dbReference>
<dbReference type="CDD" id="cd08071">
    <property type="entry name" value="MPN_DUF2466"/>
    <property type="match status" value="1"/>
</dbReference>
<dbReference type="Gene3D" id="1.10.150.20">
    <property type="entry name" value="5' to 3' exonuclease, C-terminal subdomain"/>
    <property type="match status" value="1"/>
</dbReference>
<dbReference type="Gene3D" id="3.40.140.10">
    <property type="entry name" value="Cytidine Deaminase, domain 2"/>
    <property type="match status" value="1"/>
</dbReference>
<dbReference type="InterPro" id="IPR037518">
    <property type="entry name" value="MPN"/>
</dbReference>
<dbReference type="InterPro" id="IPR025657">
    <property type="entry name" value="RadC_JAB"/>
</dbReference>
<dbReference type="InterPro" id="IPR010994">
    <property type="entry name" value="RuvA_2-like"/>
</dbReference>
<dbReference type="InterPro" id="IPR001405">
    <property type="entry name" value="UPF0758"/>
</dbReference>
<dbReference type="InterPro" id="IPR020891">
    <property type="entry name" value="UPF0758_CS"/>
</dbReference>
<dbReference type="InterPro" id="IPR046778">
    <property type="entry name" value="UPF0758_N"/>
</dbReference>
<dbReference type="NCBIfam" id="NF000642">
    <property type="entry name" value="PRK00024.1"/>
    <property type="match status" value="1"/>
</dbReference>
<dbReference type="NCBIfam" id="TIGR00608">
    <property type="entry name" value="radc"/>
    <property type="match status" value="1"/>
</dbReference>
<dbReference type="PANTHER" id="PTHR30471">
    <property type="entry name" value="DNA REPAIR PROTEIN RADC"/>
    <property type="match status" value="1"/>
</dbReference>
<dbReference type="PANTHER" id="PTHR30471:SF3">
    <property type="entry name" value="UPF0758 PROTEIN YEES-RELATED"/>
    <property type="match status" value="1"/>
</dbReference>
<dbReference type="Pfam" id="PF04002">
    <property type="entry name" value="RadC"/>
    <property type="match status" value="1"/>
</dbReference>
<dbReference type="Pfam" id="PF20582">
    <property type="entry name" value="UPF0758_N"/>
    <property type="match status" value="1"/>
</dbReference>
<dbReference type="SUPFAM" id="SSF102712">
    <property type="entry name" value="JAB1/MPN domain"/>
    <property type="match status" value="1"/>
</dbReference>
<dbReference type="SUPFAM" id="SSF47781">
    <property type="entry name" value="RuvA domain 2-like"/>
    <property type="match status" value="1"/>
</dbReference>
<dbReference type="PROSITE" id="PS50249">
    <property type="entry name" value="MPN"/>
    <property type="match status" value="1"/>
</dbReference>
<dbReference type="PROSITE" id="PS01302">
    <property type="entry name" value="UPF0758"/>
    <property type="match status" value="1"/>
</dbReference>
<keyword id="KW-0378">Hydrolase</keyword>
<keyword id="KW-0479">Metal-binding</keyword>
<keyword id="KW-0482">Metalloprotease</keyword>
<keyword id="KW-0645">Protease</keyword>
<keyword id="KW-1185">Reference proteome</keyword>
<keyword id="KW-0862">Zinc</keyword>
<proteinExistence type="inferred from homology"/>
<sequence>MAITDWPENERPREKLLTRGTAALSDAELLALFLRVGMRGKSAVDLARDLLQQFGSLTRLCAASAAEFSAIPGMGLAKYAQLQAVMELARRALAEQMNDADVFESPLAVRNWLRLRIGSLPHEVFHVLLLDARNRLIEAVELFRGTLTQTSVYPREVVKLALARNAAAVILAHNHPSGAAEPSPADELLTRSLKQALELVDIRVLDHFIVTAHAQPLSFAERGLL</sequence>
<name>Y442_AROAE</name>